<organism>
    <name type="scientific">Mesoplasma florum (strain ATCC 33453 / NBRC 100688 / NCTC 11704 / L1)</name>
    <name type="common">Acholeplasma florum</name>
    <dbReference type="NCBI Taxonomy" id="265311"/>
    <lineage>
        <taxon>Bacteria</taxon>
        <taxon>Bacillati</taxon>
        <taxon>Mycoplasmatota</taxon>
        <taxon>Mollicutes</taxon>
        <taxon>Entomoplasmatales</taxon>
        <taxon>Entomoplasmataceae</taxon>
        <taxon>Mesoplasma</taxon>
    </lineage>
</organism>
<accession>Q6F1R7</accession>
<dbReference type="EMBL" id="AE017263">
    <property type="protein sequence ID" value="AAT75556.1"/>
    <property type="molecule type" value="Genomic_DNA"/>
</dbReference>
<dbReference type="RefSeq" id="WP_011183096.1">
    <property type="nucleotide sequence ID" value="NC_006055.1"/>
</dbReference>
<dbReference type="RefSeq" id="YP_053440.1">
    <property type="nucleotide sequence ID" value="NC_006055.1"/>
</dbReference>
<dbReference type="SMR" id="Q6F1R7"/>
<dbReference type="STRING" id="265311.Mfl199"/>
<dbReference type="PaxDb" id="265311-Mfl199"/>
<dbReference type="EnsemblBacteria" id="AAT75556">
    <property type="protein sequence ID" value="AAT75556"/>
    <property type="gene ID" value="Mfl199"/>
</dbReference>
<dbReference type="GeneID" id="2898255"/>
<dbReference type="KEGG" id="mfl:Mfl199"/>
<dbReference type="PATRIC" id="fig|265311.5.peg.200"/>
<dbReference type="eggNOG" id="COG1160">
    <property type="taxonomic scope" value="Bacteria"/>
</dbReference>
<dbReference type="HOGENOM" id="CLU_016077_6_2_14"/>
<dbReference type="OrthoDB" id="9805918at2"/>
<dbReference type="Proteomes" id="UP000006647">
    <property type="component" value="Chromosome"/>
</dbReference>
<dbReference type="GO" id="GO:0005525">
    <property type="term" value="F:GTP binding"/>
    <property type="evidence" value="ECO:0007669"/>
    <property type="project" value="UniProtKB-UniRule"/>
</dbReference>
<dbReference type="GO" id="GO:0043022">
    <property type="term" value="F:ribosome binding"/>
    <property type="evidence" value="ECO:0007669"/>
    <property type="project" value="TreeGrafter"/>
</dbReference>
<dbReference type="GO" id="GO:0042254">
    <property type="term" value="P:ribosome biogenesis"/>
    <property type="evidence" value="ECO:0007669"/>
    <property type="project" value="UniProtKB-KW"/>
</dbReference>
<dbReference type="CDD" id="cd01894">
    <property type="entry name" value="EngA1"/>
    <property type="match status" value="1"/>
</dbReference>
<dbReference type="CDD" id="cd01895">
    <property type="entry name" value="EngA2"/>
    <property type="match status" value="1"/>
</dbReference>
<dbReference type="FunFam" id="3.30.300.20:FF:000004">
    <property type="entry name" value="GTPase Der"/>
    <property type="match status" value="1"/>
</dbReference>
<dbReference type="FunFam" id="3.40.50.300:FF:000040">
    <property type="entry name" value="GTPase Der"/>
    <property type="match status" value="1"/>
</dbReference>
<dbReference type="FunFam" id="3.40.50.300:FF:000057">
    <property type="entry name" value="GTPase Der"/>
    <property type="match status" value="1"/>
</dbReference>
<dbReference type="Gene3D" id="3.30.300.20">
    <property type="match status" value="1"/>
</dbReference>
<dbReference type="Gene3D" id="3.40.50.300">
    <property type="entry name" value="P-loop containing nucleotide triphosphate hydrolases"/>
    <property type="match status" value="2"/>
</dbReference>
<dbReference type="HAMAP" id="MF_00195">
    <property type="entry name" value="GTPase_Der"/>
    <property type="match status" value="1"/>
</dbReference>
<dbReference type="InterPro" id="IPR031166">
    <property type="entry name" value="G_ENGA"/>
</dbReference>
<dbReference type="InterPro" id="IPR006073">
    <property type="entry name" value="GTP-bd"/>
</dbReference>
<dbReference type="InterPro" id="IPR016484">
    <property type="entry name" value="GTPase_Der"/>
</dbReference>
<dbReference type="InterPro" id="IPR032859">
    <property type="entry name" value="KH_dom-like"/>
</dbReference>
<dbReference type="InterPro" id="IPR015946">
    <property type="entry name" value="KH_dom-like_a/b"/>
</dbReference>
<dbReference type="InterPro" id="IPR027417">
    <property type="entry name" value="P-loop_NTPase"/>
</dbReference>
<dbReference type="InterPro" id="IPR005225">
    <property type="entry name" value="Small_GTP-bd"/>
</dbReference>
<dbReference type="NCBIfam" id="TIGR03594">
    <property type="entry name" value="GTPase_EngA"/>
    <property type="match status" value="1"/>
</dbReference>
<dbReference type="NCBIfam" id="TIGR00231">
    <property type="entry name" value="small_GTP"/>
    <property type="match status" value="2"/>
</dbReference>
<dbReference type="PANTHER" id="PTHR43834">
    <property type="entry name" value="GTPASE DER"/>
    <property type="match status" value="1"/>
</dbReference>
<dbReference type="PANTHER" id="PTHR43834:SF6">
    <property type="entry name" value="GTPASE DER"/>
    <property type="match status" value="1"/>
</dbReference>
<dbReference type="Pfam" id="PF14714">
    <property type="entry name" value="KH_dom-like"/>
    <property type="match status" value="1"/>
</dbReference>
<dbReference type="Pfam" id="PF01926">
    <property type="entry name" value="MMR_HSR1"/>
    <property type="match status" value="2"/>
</dbReference>
<dbReference type="PIRSF" id="PIRSF006485">
    <property type="entry name" value="GTP-binding_EngA"/>
    <property type="match status" value="1"/>
</dbReference>
<dbReference type="PRINTS" id="PR00326">
    <property type="entry name" value="GTP1OBG"/>
</dbReference>
<dbReference type="SMART" id="SM00173">
    <property type="entry name" value="RAS"/>
    <property type="match status" value="1"/>
</dbReference>
<dbReference type="SUPFAM" id="SSF52540">
    <property type="entry name" value="P-loop containing nucleoside triphosphate hydrolases"/>
    <property type="match status" value="2"/>
</dbReference>
<dbReference type="PROSITE" id="PS51712">
    <property type="entry name" value="G_ENGA"/>
    <property type="match status" value="2"/>
</dbReference>
<feature type="chain" id="PRO_1000011662" description="GTPase Der">
    <location>
        <begin position="1"/>
        <end position="435"/>
    </location>
</feature>
<feature type="domain" description="EngA-type G 1">
    <location>
        <begin position="4"/>
        <end position="167"/>
    </location>
</feature>
<feature type="domain" description="EngA-type G 2">
    <location>
        <begin position="175"/>
        <end position="350"/>
    </location>
</feature>
<feature type="domain" description="KH-like" evidence="1">
    <location>
        <begin position="351"/>
        <end position="435"/>
    </location>
</feature>
<feature type="binding site" evidence="1">
    <location>
        <begin position="10"/>
        <end position="17"/>
    </location>
    <ligand>
        <name>GTP</name>
        <dbReference type="ChEBI" id="CHEBI:37565"/>
        <label>1</label>
    </ligand>
</feature>
<feature type="binding site" evidence="1">
    <location>
        <begin position="57"/>
        <end position="61"/>
    </location>
    <ligand>
        <name>GTP</name>
        <dbReference type="ChEBI" id="CHEBI:37565"/>
        <label>1</label>
    </ligand>
</feature>
<feature type="binding site" evidence="1">
    <location>
        <begin position="119"/>
        <end position="122"/>
    </location>
    <ligand>
        <name>GTP</name>
        <dbReference type="ChEBI" id="CHEBI:37565"/>
        <label>1</label>
    </ligand>
</feature>
<feature type="binding site" evidence="1">
    <location>
        <begin position="181"/>
        <end position="188"/>
    </location>
    <ligand>
        <name>GTP</name>
        <dbReference type="ChEBI" id="CHEBI:37565"/>
        <label>2</label>
    </ligand>
</feature>
<feature type="binding site" evidence="1">
    <location>
        <begin position="228"/>
        <end position="232"/>
    </location>
    <ligand>
        <name>GTP</name>
        <dbReference type="ChEBI" id="CHEBI:37565"/>
        <label>2</label>
    </ligand>
</feature>
<feature type="binding site" evidence="1">
    <location>
        <begin position="293"/>
        <end position="296"/>
    </location>
    <ligand>
        <name>GTP</name>
        <dbReference type="ChEBI" id="CHEBI:37565"/>
        <label>2</label>
    </ligand>
</feature>
<proteinExistence type="inferred from homology"/>
<protein>
    <recommendedName>
        <fullName evidence="1">GTPase Der</fullName>
    </recommendedName>
    <alternativeName>
        <fullName evidence="1">GTP-binding protein EngA</fullName>
    </alternativeName>
</protein>
<gene>
    <name evidence="1" type="primary">der</name>
    <name type="synonym">engA</name>
    <name type="ordered locus">Mfl199</name>
</gene>
<name>DER_MESFL</name>
<evidence type="ECO:0000255" key="1">
    <source>
        <dbReference type="HAMAP-Rule" id="MF_00195"/>
    </source>
</evidence>
<keyword id="KW-0342">GTP-binding</keyword>
<keyword id="KW-0547">Nucleotide-binding</keyword>
<keyword id="KW-1185">Reference proteome</keyword>
<keyword id="KW-0677">Repeat</keyword>
<keyword id="KW-0690">Ribosome biogenesis</keyword>
<reference key="1">
    <citation type="submission" date="2004-06" db="EMBL/GenBank/DDBJ databases">
        <authorList>
            <person name="Birren B.W."/>
            <person name="Stange-Thomann N."/>
            <person name="Hafez N."/>
            <person name="DeCaprio D."/>
            <person name="Fisher S."/>
            <person name="Butler J."/>
            <person name="Elkins T."/>
            <person name="Kodira C.D."/>
            <person name="Major J."/>
            <person name="Wang S."/>
            <person name="Nicol R."/>
            <person name="Nusbaum C."/>
        </authorList>
    </citation>
    <scope>NUCLEOTIDE SEQUENCE [LARGE SCALE GENOMIC DNA]</scope>
    <source>
        <strain>ATCC 33453 / NBRC 100688 / NCTC 11704 / L1</strain>
    </source>
</reference>
<comment type="function">
    <text evidence="1">GTPase that plays an essential role in the late steps of ribosome biogenesis.</text>
</comment>
<comment type="subunit">
    <text evidence="1">Associates with the 50S ribosomal subunit.</text>
</comment>
<comment type="similarity">
    <text evidence="1">Belongs to the TRAFAC class TrmE-Era-EngA-EngB-Septin-like GTPase superfamily. EngA (Der) GTPase family.</text>
</comment>
<sequence length="435" mass="49267">MKKGIVAIVGRPNVGKSSLFNRIIREKKSIVEDTPGVTRDRIYGTAEWLTREFIVIDTGGITLEDQPFAKEIKVQAEIAMEEADVIVFLLNHQEGLSDEDKMIAKILYKTKKPIVLAVNKYDKKTSDFDQYEYMSLGFGEPILISATHGIGTGDLLDDIIHQMPSHEEINKDNRTRVSIIGRPNVGKSSLVNSLIGEERMIVSDIPGTTLDAVDSVVKVNNIEYTLIDTAGIRKKSKIFQNVEKYSYLRSLTTINGSDVVLLMLDASVPISDLDTNIGGLAFEEKKPIIIIANKWDLVENKEKEILKKEDEIRAYFKYLAYAKILFVSAHDKTRITKIFTAVEDIRTALDKKIKTSVFNEVLNKAQLINPAPNFNGGRLKIYYGAQVEAYLPTFVLFVNNPDYVHFSYKRFLENQIRLQFGFEGVPMSIIFRERK</sequence>